<keyword id="KW-1185">Reference proteome</keyword>
<proteinExistence type="evidence at transcript level"/>
<feature type="chain" id="PRO_0000320598" description="Putative uncharacterized protein FLJ39060">
    <location>
        <begin position="1"/>
        <end position="123"/>
    </location>
</feature>
<accession>Q8N8P6</accession>
<name>YX004_HUMAN</name>
<protein>
    <recommendedName>
        <fullName>Putative uncharacterized protein FLJ39060</fullName>
    </recommendedName>
</protein>
<organism>
    <name type="scientific">Homo sapiens</name>
    <name type="common">Human</name>
    <dbReference type="NCBI Taxonomy" id="9606"/>
    <lineage>
        <taxon>Eukaryota</taxon>
        <taxon>Metazoa</taxon>
        <taxon>Chordata</taxon>
        <taxon>Craniata</taxon>
        <taxon>Vertebrata</taxon>
        <taxon>Euteleostomi</taxon>
        <taxon>Mammalia</taxon>
        <taxon>Eutheria</taxon>
        <taxon>Euarchontoglires</taxon>
        <taxon>Primates</taxon>
        <taxon>Haplorrhini</taxon>
        <taxon>Catarrhini</taxon>
        <taxon>Hominidae</taxon>
        <taxon>Homo</taxon>
    </lineage>
</organism>
<sequence>MVDGRTRTIINDIFFTEPTPEMSSLPVRSHSSLSLNLVSLMVICRGIIKLVIHFRMYCPPRLKAKHIEPTLRPVPLKELRISHWPNECIRHSASVPMATGANGLETKDETKRNAEKCACSVFL</sequence>
<reference key="1">
    <citation type="journal article" date="2004" name="Nat. Genet.">
        <title>Complete sequencing and characterization of 21,243 full-length human cDNAs.</title>
        <authorList>
            <person name="Ota T."/>
            <person name="Suzuki Y."/>
            <person name="Nishikawa T."/>
            <person name="Otsuki T."/>
            <person name="Sugiyama T."/>
            <person name="Irie R."/>
            <person name="Wakamatsu A."/>
            <person name="Hayashi K."/>
            <person name="Sato H."/>
            <person name="Nagai K."/>
            <person name="Kimura K."/>
            <person name="Makita H."/>
            <person name="Sekine M."/>
            <person name="Obayashi M."/>
            <person name="Nishi T."/>
            <person name="Shibahara T."/>
            <person name="Tanaka T."/>
            <person name="Ishii S."/>
            <person name="Yamamoto J."/>
            <person name="Saito K."/>
            <person name="Kawai Y."/>
            <person name="Isono Y."/>
            <person name="Nakamura Y."/>
            <person name="Nagahari K."/>
            <person name="Murakami K."/>
            <person name="Yasuda T."/>
            <person name="Iwayanagi T."/>
            <person name="Wagatsuma M."/>
            <person name="Shiratori A."/>
            <person name="Sudo H."/>
            <person name="Hosoiri T."/>
            <person name="Kaku Y."/>
            <person name="Kodaira H."/>
            <person name="Kondo H."/>
            <person name="Sugawara M."/>
            <person name="Takahashi M."/>
            <person name="Kanda K."/>
            <person name="Yokoi T."/>
            <person name="Furuya T."/>
            <person name="Kikkawa E."/>
            <person name="Omura Y."/>
            <person name="Abe K."/>
            <person name="Kamihara K."/>
            <person name="Katsuta N."/>
            <person name="Sato K."/>
            <person name="Tanikawa M."/>
            <person name="Yamazaki M."/>
            <person name="Ninomiya K."/>
            <person name="Ishibashi T."/>
            <person name="Yamashita H."/>
            <person name="Murakawa K."/>
            <person name="Fujimori K."/>
            <person name="Tanai H."/>
            <person name="Kimata M."/>
            <person name="Watanabe M."/>
            <person name="Hiraoka S."/>
            <person name="Chiba Y."/>
            <person name="Ishida S."/>
            <person name="Ono Y."/>
            <person name="Takiguchi S."/>
            <person name="Watanabe S."/>
            <person name="Yosida M."/>
            <person name="Hotuta T."/>
            <person name="Kusano J."/>
            <person name="Kanehori K."/>
            <person name="Takahashi-Fujii A."/>
            <person name="Hara H."/>
            <person name="Tanase T.-O."/>
            <person name="Nomura Y."/>
            <person name="Togiya S."/>
            <person name="Komai F."/>
            <person name="Hara R."/>
            <person name="Takeuchi K."/>
            <person name="Arita M."/>
            <person name="Imose N."/>
            <person name="Musashino K."/>
            <person name="Yuuki H."/>
            <person name="Oshima A."/>
            <person name="Sasaki N."/>
            <person name="Aotsuka S."/>
            <person name="Yoshikawa Y."/>
            <person name="Matsunawa H."/>
            <person name="Ichihara T."/>
            <person name="Shiohata N."/>
            <person name="Sano S."/>
            <person name="Moriya S."/>
            <person name="Momiyama H."/>
            <person name="Satoh N."/>
            <person name="Takami S."/>
            <person name="Terashima Y."/>
            <person name="Suzuki O."/>
            <person name="Nakagawa S."/>
            <person name="Senoh A."/>
            <person name="Mizoguchi H."/>
            <person name="Goto Y."/>
            <person name="Shimizu F."/>
            <person name="Wakebe H."/>
            <person name="Hishigaki H."/>
            <person name="Watanabe T."/>
            <person name="Sugiyama A."/>
            <person name="Takemoto M."/>
            <person name="Kawakami B."/>
            <person name="Yamazaki M."/>
            <person name="Watanabe K."/>
            <person name="Kumagai A."/>
            <person name="Itakura S."/>
            <person name="Fukuzumi Y."/>
            <person name="Fujimori Y."/>
            <person name="Komiyama M."/>
            <person name="Tashiro H."/>
            <person name="Tanigami A."/>
            <person name="Fujiwara T."/>
            <person name="Ono T."/>
            <person name="Yamada K."/>
            <person name="Fujii Y."/>
            <person name="Ozaki K."/>
            <person name="Hirao M."/>
            <person name="Ohmori Y."/>
            <person name="Kawabata A."/>
            <person name="Hikiji T."/>
            <person name="Kobatake N."/>
            <person name="Inagaki H."/>
            <person name="Ikema Y."/>
            <person name="Okamoto S."/>
            <person name="Okitani R."/>
            <person name="Kawakami T."/>
            <person name="Noguchi S."/>
            <person name="Itoh T."/>
            <person name="Shigeta K."/>
            <person name="Senba T."/>
            <person name="Matsumura K."/>
            <person name="Nakajima Y."/>
            <person name="Mizuno T."/>
            <person name="Morinaga M."/>
            <person name="Sasaki M."/>
            <person name="Togashi T."/>
            <person name="Oyama M."/>
            <person name="Hata H."/>
            <person name="Watanabe M."/>
            <person name="Komatsu T."/>
            <person name="Mizushima-Sugano J."/>
            <person name="Satoh T."/>
            <person name="Shirai Y."/>
            <person name="Takahashi Y."/>
            <person name="Nakagawa K."/>
            <person name="Okumura K."/>
            <person name="Nagase T."/>
            <person name="Nomura N."/>
            <person name="Kikuchi H."/>
            <person name="Masuho Y."/>
            <person name="Yamashita R."/>
            <person name="Nakai K."/>
            <person name="Yada T."/>
            <person name="Nakamura Y."/>
            <person name="Ohara O."/>
            <person name="Isogai T."/>
            <person name="Sugano S."/>
        </authorList>
    </citation>
    <scope>NUCLEOTIDE SEQUENCE [LARGE SCALE MRNA]</scope>
    <source>
        <tissue>Teratocarcinoma</tissue>
    </source>
</reference>
<reference key="2">
    <citation type="journal article" date="2005" name="Nature">
        <title>The DNA sequence of the human X chromosome.</title>
        <authorList>
            <person name="Ross M.T."/>
            <person name="Grafham D.V."/>
            <person name="Coffey A.J."/>
            <person name="Scherer S."/>
            <person name="McLay K."/>
            <person name="Muzny D."/>
            <person name="Platzer M."/>
            <person name="Howell G.R."/>
            <person name="Burrows C."/>
            <person name="Bird C.P."/>
            <person name="Frankish A."/>
            <person name="Lovell F.L."/>
            <person name="Howe K.L."/>
            <person name="Ashurst J.L."/>
            <person name="Fulton R.S."/>
            <person name="Sudbrak R."/>
            <person name="Wen G."/>
            <person name="Jones M.C."/>
            <person name="Hurles M.E."/>
            <person name="Andrews T.D."/>
            <person name="Scott C.E."/>
            <person name="Searle S."/>
            <person name="Ramser J."/>
            <person name="Whittaker A."/>
            <person name="Deadman R."/>
            <person name="Carter N.P."/>
            <person name="Hunt S.E."/>
            <person name="Chen R."/>
            <person name="Cree A."/>
            <person name="Gunaratne P."/>
            <person name="Havlak P."/>
            <person name="Hodgson A."/>
            <person name="Metzker M.L."/>
            <person name="Richards S."/>
            <person name="Scott G."/>
            <person name="Steffen D."/>
            <person name="Sodergren E."/>
            <person name="Wheeler D.A."/>
            <person name="Worley K.C."/>
            <person name="Ainscough R."/>
            <person name="Ambrose K.D."/>
            <person name="Ansari-Lari M.A."/>
            <person name="Aradhya S."/>
            <person name="Ashwell R.I."/>
            <person name="Babbage A.K."/>
            <person name="Bagguley C.L."/>
            <person name="Ballabio A."/>
            <person name="Banerjee R."/>
            <person name="Barker G.E."/>
            <person name="Barlow K.F."/>
            <person name="Barrett I.P."/>
            <person name="Bates K.N."/>
            <person name="Beare D.M."/>
            <person name="Beasley H."/>
            <person name="Beasley O."/>
            <person name="Beck A."/>
            <person name="Bethel G."/>
            <person name="Blechschmidt K."/>
            <person name="Brady N."/>
            <person name="Bray-Allen S."/>
            <person name="Bridgeman A.M."/>
            <person name="Brown A.J."/>
            <person name="Brown M.J."/>
            <person name="Bonnin D."/>
            <person name="Bruford E.A."/>
            <person name="Buhay C."/>
            <person name="Burch P."/>
            <person name="Burford D."/>
            <person name="Burgess J."/>
            <person name="Burrill W."/>
            <person name="Burton J."/>
            <person name="Bye J.M."/>
            <person name="Carder C."/>
            <person name="Carrel L."/>
            <person name="Chako J."/>
            <person name="Chapman J.C."/>
            <person name="Chavez D."/>
            <person name="Chen E."/>
            <person name="Chen G."/>
            <person name="Chen Y."/>
            <person name="Chen Z."/>
            <person name="Chinault C."/>
            <person name="Ciccodicola A."/>
            <person name="Clark S.Y."/>
            <person name="Clarke G."/>
            <person name="Clee C.M."/>
            <person name="Clegg S."/>
            <person name="Clerc-Blankenburg K."/>
            <person name="Clifford K."/>
            <person name="Cobley V."/>
            <person name="Cole C.G."/>
            <person name="Conquer J.S."/>
            <person name="Corby N."/>
            <person name="Connor R.E."/>
            <person name="David R."/>
            <person name="Davies J."/>
            <person name="Davis C."/>
            <person name="Davis J."/>
            <person name="Delgado O."/>
            <person name="Deshazo D."/>
            <person name="Dhami P."/>
            <person name="Ding Y."/>
            <person name="Dinh H."/>
            <person name="Dodsworth S."/>
            <person name="Draper H."/>
            <person name="Dugan-Rocha S."/>
            <person name="Dunham A."/>
            <person name="Dunn M."/>
            <person name="Durbin K.J."/>
            <person name="Dutta I."/>
            <person name="Eades T."/>
            <person name="Ellwood M."/>
            <person name="Emery-Cohen A."/>
            <person name="Errington H."/>
            <person name="Evans K.L."/>
            <person name="Faulkner L."/>
            <person name="Francis F."/>
            <person name="Frankland J."/>
            <person name="Fraser A.E."/>
            <person name="Galgoczy P."/>
            <person name="Gilbert J."/>
            <person name="Gill R."/>
            <person name="Gloeckner G."/>
            <person name="Gregory S.G."/>
            <person name="Gribble S."/>
            <person name="Griffiths C."/>
            <person name="Grocock R."/>
            <person name="Gu Y."/>
            <person name="Gwilliam R."/>
            <person name="Hamilton C."/>
            <person name="Hart E.A."/>
            <person name="Hawes A."/>
            <person name="Heath P.D."/>
            <person name="Heitmann K."/>
            <person name="Hennig S."/>
            <person name="Hernandez J."/>
            <person name="Hinzmann B."/>
            <person name="Ho S."/>
            <person name="Hoffs M."/>
            <person name="Howden P.J."/>
            <person name="Huckle E.J."/>
            <person name="Hume J."/>
            <person name="Hunt P.J."/>
            <person name="Hunt A.R."/>
            <person name="Isherwood J."/>
            <person name="Jacob L."/>
            <person name="Johnson D."/>
            <person name="Jones S."/>
            <person name="de Jong P.J."/>
            <person name="Joseph S.S."/>
            <person name="Keenan S."/>
            <person name="Kelly S."/>
            <person name="Kershaw J.K."/>
            <person name="Khan Z."/>
            <person name="Kioschis P."/>
            <person name="Klages S."/>
            <person name="Knights A.J."/>
            <person name="Kosiura A."/>
            <person name="Kovar-Smith C."/>
            <person name="Laird G.K."/>
            <person name="Langford C."/>
            <person name="Lawlor S."/>
            <person name="Leversha M."/>
            <person name="Lewis L."/>
            <person name="Liu W."/>
            <person name="Lloyd C."/>
            <person name="Lloyd D.M."/>
            <person name="Loulseged H."/>
            <person name="Loveland J.E."/>
            <person name="Lovell J.D."/>
            <person name="Lozado R."/>
            <person name="Lu J."/>
            <person name="Lyne R."/>
            <person name="Ma J."/>
            <person name="Maheshwari M."/>
            <person name="Matthews L.H."/>
            <person name="McDowall J."/>
            <person name="McLaren S."/>
            <person name="McMurray A."/>
            <person name="Meidl P."/>
            <person name="Meitinger T."/>
            <person name="Milne S."/>
            <person name="Miner G."/>
            <person name="Mistry S.L."/>
            <person name="Morgan M."/>
            <person name="Morris S."/>
            <person name="Mueller I."/>
            <person name="Mullikin J.C."/>
            <person name="Nguyen N."/>
            <person name="Nordsiek G."/>
            <person name="Nyakatura G."/>
            <person name="O'dell C.N."/>
            <person name="Okwuonu G."/>
            <person name="Palmer S."/>
            <person name="Pandian R."/>
            <person name="Parker D."/>
            <person name="Parrish J."/>
            <person name="Pasternak S."/>
            <person name="Patel D."/>
            <person name="Pearce A.V."/>
            <person name="Pearson D.M."/>
            <person name="Pelan S.E."/>
            <person name="Perez L."/>
            <person name="Porter K.M."/>
            <person name="Ramsey Y."/>
            <person name="Reichwald K."/>
            <person name="Rhodes S."/>
            <person name="Ridler K.A."/>
            <person name="Schlessinger D."/>
            <person name="Schueler M.G."/>
            <person name="Sehra H.K."/>
            <person name="Shaw-Smith C."/>
            <person name="Shen H."/>
            <person name="Sheridan E.M."/>
            <person name="Shownkeen R."/>
            <person name="Skuce C.D."/>
            <person name="Smith M.L."/>
            <person name="Sotheran E.C."/>
            <person name="Steingruber H.E."/>
            <person name="Steward C.A."/>
            <person name="Storey R."/>
            <person name="Swann R.M."/>
            <person name="Swarbreck D."/>
            <person name="Tabor P.E."/>
            <person name="Taudien S."/>
            <person name="Taylor T."/>
            <person name="Teague B."/>
            <person name="Thomas K."/>
            <person name="Thorpe A."/>
            <person name="Timms K."/>
            <person name="Tracey A."/>
            <person name="Trevanion S."/>
            <person name="Tromans A.C."/>
            <person name="d'Urso M."/>
            <person name="Verduzco D."/>
            <person name="Villasana D."/>
            <person name="Waldron L."/>
            <person name="Wall M."/>
            <person name="Wang Q."/>
            <person name="Warren J."/>
            <person name="Warry G.L."/>
            <person name="Wei X."/>
            <person name="West A."/>
            <person name="Whitehead S.L."/>
            <person name="Whiteley M.N."/>
            <person name="Wilkinson J.E."/>
            <person name="Willey D.L."/>
            <person name="Williams G."/>
            <person name="Williams L."/>
            <person name="Williamson A."/>
            <person name="Williamson H."/>
            <person name="Wilming L."/>
            <person name="Woodmansey R.L."/>
            <person name="Wray P.W."/>
            <person name="Yen J."/>
            <person name="Zhang J."/>
            <person name="Zhou J."/>
            <person name="Zoghbi H."/>
            <person name="Zorilla S."/>
            <person name="Buck D."/>
            <person name="Reinhardt R."/>
            <person name="Poustka A."/>
            <person name="Rosenthal A."/>
            <person name="Lehrach H."/>
            <person name="Meindl A."/>
            <person name="Minx P.J."/>
            <person name="Hillier L.W."/>
            <person name="Willard H.F."/>
            <person name="Wilson R.K."/>
            <person name="Waterston R.H."/>
            <person name="Rice C.M."/>
            <person name="Vaudin M."/>
            <person name="Coulson A."/>
            <person name="Nelson D.L."/>
            <person name="Weinstock G."/>
            <person name="Sulston J.E."/>
            <person name="Durbin R.M."/>
            <person name="Hubbard T."/>
            <person name="Gibbs R.A."/>
            <person name="Beck S."/>
            <person name="Rogers J."/>
            <person name="Bentley D.R."/>
        </authorList>
    </citation>
    <scope>NUCLEOTIDE SEQUENCE [LARGE SCALE GENOMIC DNA]</scope>
</reference>
<dbReference type="EMBL" id="AK096379">
    <property type="protein sequence ID" value="BAC04772.1"/>
    <property type="molecule type" value="mRNA"/>
</dbReference>
<dbReference type="EMBL" id="BX322790">
    <property type="protein sequence ID" value="CAH70175.1"/>
    <property type="molecule type" value="Genomic_DNA"/>
</dbReference>
<dbReference type="EMBL" id="AL928717">
    <property type="status" value="NOT_ANNOTATED_CDS"/>
    <property type="molecule type" value="Genomic_DNA"/>
</dbReference>
<dbReference type="BioMuta" id="-"/>
<dbReference type="neXtProt" id="NX_Q8N8P6"/>
<dbReference type="InParanoid" id="Q8N8P6"/>
<dbReference type="PAN-GO" id="Q8N8P6">
    <property type="GO annotations" value="0 GO annotations based on evolutionary models"/>
</dbReference>
<dbReference type="PhylomeDB" id="Q8N8P6"/>
<dbReference type="Pharos" id="Q8N8P6">
    <property type="development level" value="Tdark"/>
</dbReference>
<dbReference type="Proteomes" id="UP000005640">
    <property type="component" value="Unplaced"/>
</dbReference>
<dbReference type="RNAct" id="Q8N8P6">
    <property type="molecule type" value="protein"/>
</dbReference>